<reference key="1">
    <citation type="journal article" date="2007" name="Nature">
        <title>Evolution of genes and genomes on the Drosophila phylogeny.</title>
        <authorList>
            <consortium name="Drosophila 12 genomes consortium"/>
        </authorList>
    </citation>
    <scope>NUCLEOTIDE SEQUENCE [LARGE SCALE GENOMIC DNA]</scope>
    <source>
        <strain>Tai18E2 / Tucson 14021-0261.01</strain>
    </source>
</reference>
<dbReference type="EMBL" id="CM000158">
    <property type="protein sequence ID" value="EDW91974.1"/>
    <property type="molecule type" value="Genomic_DNA"/>
</dbReference>
<dbReference type="SMR" id="B4P6P7"/>
<dbReference type="EnsemblMetazoa" id="FBtr0258281">
    <property type="protein sequence ID" value="FBpp0256773"/>
    <property type="gene ID" value="FBgn0229557"/>
</dbReference>
<dbReference type="EnsemblMetazoa" id="XM_002092226.4">
    <property type="protein sequence ID" value="XP_002092262.1"/>
    <property type="gene ID" value="LOC6531463"/>
</dbReference>
<dbReference type="GeneID" id="6531463"/>
<dbReference type="KEGG" id="dya:Dyak_GE11763"/>
<dbReference type="CTD" id="1191"/>
<dbReference type="eggNOG" id="KOG1839">
    <property type="taxonomic scope" value="Eukaryota"/>
</dbReference>
<dbReference type="HOGENOM" id="CLU_003256_1_0_1"/>
<dbReference type="OMA" id="HPVWDKD"/>
<dbReference type="OrthoDB" id="1414216at2759"/>
<dbReference type="PhylomeDB" id="B4P6P7"/>
<dbReference type="Proteomes" id="UP000002282">
    <property type="component" value="Chromosome 2R"/>
</dbReference>
<dbReference type="GO" id="GO:0005829">
    <property type="term" value="C:cytosol"/>
    <property type="evidence" value="ECO:0007669"/>
    <property type="project" value="EnsemblMetazoa"/>
</dbReference>
<dbReference type="GO" id="GO:0003729">
    <property type="term" value="F:mRNA binding"/>
    <property type="evidence" value="ECO:0007669"/>
    <property type="project" value="EnsemblMetazoa"/>
</dbReference>
<dbReference type="GO" id="GO:0043022">
    <property type="term" value="F:ribosome binding"/>
    <property type="evidence" value="ECO:0007669"/>
    <property type="project" value="EnsemblMetazoa"/>
</dbReference>
<dbReference type="GO" id="GO:0055059">
    <property type="term" value="P:asymmetric neuroblast division"/>
    <property type="evidence" value="ECO:0007669"/>
    <property type="project" value="EnsemblMetazoa"/>
</dbReference>
<dbReference type="GO" id="GO:0048312">
    <property type="term" value="P:intracellular distribution of mitochondria"/>
    <property type="evidence" value="ECO:0007669"/>
    <property type="project" value="TreeGrafter"/>
</dbReference>
<dbReference type="GO" id="GO:0007005">
    <property type="term" value="P:mitochondrion organization"/>
    <property type="evidence" value="ECO:0007669"/>
    <property type="project" value="UniProtKB-UniRule"/>
</dbReference>
<dbReference type="GO" id="GO:0033750">
    <property type="term" value="P:ribosome localization"/>
    <property type="evidence" value="ECO:0007669"/>
    <property type="project" value="EnsemblMetazoa"/>
</dbReference>
<dbReference type="CDD" id="cd15466">
    <property type="entry name" value="CLU-central"/>
    <property type="match status" value="1"/>
</dbReference>
<dbReference type="FunFam" id="3.30.2280.10:FF:000001">
    <property type="entry name" value="Clustered mitochondria (CluA/CLU1) homolog"/>
    <property type="match status" value="1"/>
</dbReference>
<dbReference type="FunFam" id="1.25.40.10:FF:000099">
    <property type="entry name" value="Clustered mitochondria protein homolog"/>
    <property type="match status" value="1"/>
</dbReference>
<dbReference type="Gene3D" id="3.30.2280.10">
    <property type="entry name" value="Hypothetical protein (hspc210)"/>
    <property type="match status" value="1"/>
</dbReference>
<dbReference type="Gene3D" id="1.25.40.10">
    <property type="entry name" value="Tetratricopeptide repeat domain"/>
    <property type="match status" value="2"/>
</dbReference>
<dbReference type="HAMAP" id="MF_03013">
    <property type="entry name" value="CLU"/>
    <property type="match status" value="1"/>
</dbReference>
<dbReference type="InterPro" id="IPR033646">
    <property type="entry name" value="CLU-central"/>
</dbReference>
<dbReference type="InterPro" id="IPR025697">
    <property type="entry name" value="CLU_dom"/>
</dbReference>
<dbReference type="InterPro" id="IPR028275">
    <property type="entry name" value="CLU_N"/>
</dbReference>
<dbReference type="InterPro" id="IPR027523">
    <property type="entry name" value="CLU_prot"/>
</dbReference>
<dbReference type="InterPro" id="IPR007967">
    <property type="entry name" value="GSKIP_dom"/>
</dbReference>
<dbReference type="InterPro" id="IPR023231">
    <property type="entry name" value="GSKIP_dom_sf"/>
</dbReference>
<dbReference type="InterPro" id="IPR011990">
    <property type="entry name" value="TPR-like_helical_dom_sf"/>
</dbReference>
<dbReference type="PANTHER" id="PTHR12601:SF6">
    <property type="entry name" value="CLUSTERED MITOCHONDRIA PROTEIN HOMOLOG"/>
    <property type="match status" value="1"/>
</dbReference>
<dbReference type="PANTHER" id="PTHR12601">
    <property type="entry name" value="EUKARYOTIC TRANSLATION INITIATION FACTOR 3 SUBUNIT EIF-3"/>
    <property type="match status" value="1"/>
</dbReference>
<dbReference type="Pfam" id="PF13236">
    <property type="entry name" value="CLU"/>
    <property type="match status" value="1"/>
</dbReference>
<dbReference type="Pfam" id="PF15044">
    <property type="entry name" value="CLU_N"/>
    <property type="match status" value="1"/>
</dbReference>
<dbReference type="Pfam" id="PF12807">
    <property type="entry name" value="eIF3_p135"/>
    <property type="match status" value="1"/>
</dbReference>
<dbReference type="Pfam" id="PF05303">
    <property type="entry name" value="GSKIP_dom"/>
    <property type="match status" value="1"/>
</dbReference>
<dbReference type="Pfam" id="PF13374">
    <property type="entry name" value="TPR_10"/>
    <property type="match status" value="1"/>
</dbReference>
<dbReference type="Pfam" id="PF13424">
    <property type="entry name" value="TPR_12"/>
    <property type="match status" value="1"/>
</dbReference>
<dbReference type="SUPFAM" id="SSF103107">
    <property type="entry name" value="Hypothetical protein c14orf129, hspc210"/>
    <property type="match status" value="1"/>
</dbReference>
<dbReference type="SUPFAM" id="SSF48452">
    <property type="entry name" value="TPR-like"/>
    <property type="match status" value="2"/>
</dbReference>
<dbReference type="PROSITE" id="PS51823">
    <property type="entry name" value="CLU"/>
    <property type="match status" value="1"/>
</dbReference>
<accession>B4P6P7</accession>
<keyword id="KW-0963">Cytoplasm</keyword>
<keyword id="KW-0597">Phosphoprotein</keyword>
<protein>
    <recommendedName>
        <fullName evidence="2">Protein clueless</fullName>
    </recommendedName>
    <alternativeName>
        <fullName evidence="2">Clustered mitochondria protein homolog</fullName>
    </alternativeName>
</protein>
<evidence type="ECO:0000250" key="1"/>
<evidence type="ECO:0000255" key="2">
    <source>
        <dbReference type="HAMAP-Rule" id="MF_03013"/>
    </source>
</evidence>
<evidence type="ECO:0000255" key="3">
    <source>
        <dbReference type="PROSITE-ProRule" id="PRU01167"/>
    </source>
</evidence>
<evidence type="ECO:0000256" key="4">
    <source>
        <dbReference type="SAM" id="MobiDB-lite"/>
    </source>
</evidence>
<organism>
    <name type="scientific">Drosophila yakuba</name>
    <name type="common">Fruit fly</name>
    <dbReference type="NCBI Taxonomy" id="7245"/>
    <lineage>
        <taxon>Eukaryota</taxon>
        <taxon>Metazoa</taxon>
        <taxon>Ecdysozoa</taxon>
        <taxon>Arthropoda</taxon>
        <taxon>Hexapoda</taxon>
        <taxon>Insecta</taxon>
        <taxon>Pterygota</taxon>
        <taxon>Neoptera</taxon>
        <taxon>Endopterygota</taxon>
        <taxon>Diptera</taxon>
        <taxon>Brachycera</taxon>
        <taxon>Muscomorpha</taxon>
        <taxon>Ephydroidea</taxon>
        <taxon>Drosophilidae</taxon>
        <taxon>Drosophila</taxon>
        <taxon>Sophophora</taxon>
    </lineage>
</organism>
<proteinExistence type="inferred from homology"/>
<gene>
    <name evidence="2" type="primary">clu</name>
    <name type="ORF">GE11763</name>
</gene>
<sequence>MALETEAKNSNATATGDATATKASSKAKENNNTAGGKKNLNPIPSQQNSNQNLVNGNGTAADGPAGKKKGKKNRNKSPPEPTTEAVLSNGHAEKSTAEYAAEDNADADANANVEKPEDGGAPDAEADGEDIDLDALQDVGITVNISSPGADVLCVQLSSMELVQEIHQLLMDREETCHRTCFSLQLDNATLDNFAELKAISNLEQGSTIKVVEEPYTMREARIHVRHVRDLLKNLDPADAYNGIDCTSLTYLNTITQGDLLDKKKTRPDSVDCTPPEYVTPGVSEPPLLPLHPNVKNAKGPQALKVLTTSAWNPPPGPRKLHGDLMYLYVVTMEEKRFHISACSKGFYINQSTDDTFNPKPDNPSHLSHSLIDLLSHISPSFRRAFQTIQKRRTMRHAFERVATPYQVYQWASPTLEHTVDAIRAEDAFSSKLGYEEHIPGQTRDWNEELQTTRELPRKTLPERLLRERAIFKVHGDFVTAATRGAMAVIDGNVLAINPGEDPKMQMFIWNNIFFSLGFDVRDHYKELGGDAAAFVAPRYDLHGVRVYNAVDVEGLYTLGTVVIDYRGYRVTAQSIIPGILEREQEQSVVYGSIDFGKTVLSHPKYLELLRQAGKHLKILPHAVLNERDEPVELCSSVECKGIIGNDGRHYILDLLRTFPPDVNFLKLQDVQLSKELVDMGFPIEHRHKLCCLRQELLEAFIEDRHVSFIRIAAVHLQQLNAKKQSEKTEGKPVPALEGADAASKVNGADKTDVKEEKNEENEEKAQSTTGESKTAEAMVNAIREAQSNVATSNEVQAAEVVKRACAAVGSLKEKEFDFRFNPDVFSPGIRHVDGEEGTCSSLAKQKVLVQEAAEFLVLKQIPAFIKEHMTHSSPPIDGQSLTESLHSHGINVRYLGKVIKILGQMPRMDYLHRIAVLELIVRATKHIYYTYMQNTEPLHLSAAISHFLNCLLTNGPVNPAVSSEEAHKKRGNGGKHNKHKSSKGGKGQQQQQTTGNQNGSSSGTSNGSSVSDWTLVTPRSLWQQIRKEAKVYWDWELDCDSIETAVSKYGILRISLLRAFCLKVGIQVLLREYNFESKHKPTFGDDDVVNVFPVVKHISPRATDAYNFYTTGQAKIQQGMFKEGYELISGALNLLNNVFGALHQENGSCLRMLARLSYLLGDAQDALAIQQRAVIMSERVNGMDHPSTILEYTHLSLYSFANGHVGMSLKLLYRARYLMVLICGEDHPEVALIDSNISLILHALGEYELSLRFIEHALKLNLKYFGDKAMPVALSYHLMARTQSCMGDFRSALNNEKETYSFYKSQLGENHEKTRDSAECLRLLTQQAVLLQRKMNDIYSSGKLTSDLPPIHITPPSMGSVLDMLNTINGILFVKISRKDIVKVRSEIEKHFKADSPENEVNDAINSIVAAANNNGEAEDADPKDVKEQAQAGTQLTNGEKAAATEATSS</sequence>
<name>CLU_DROYA</name>
<feature type="chain" id="PRO_0000366388" description="Protein clueless">
    <location>
        <begin position="1"/>
        <end position="1451"/>
    </location>
</feature>
<feature type="domain" description="Clu" evidence="3">
    <location>
        <begin position="424"/>
        <end position="666"/>
    </location>
</feature>
<feature type="region of interest" description="Disordered" evidence="4">
    <location>
        <begin position="1"/>
        <end position="101"/>
    </location>
</feature>
<feature type="region of interest" description="Disordered" evidence="4">
    <location>
        <begin position="264"/>
        <end position="286"/>
    </location>
</feature>
<feature type="region of interest" description="Disordered" evidence="4">
    <location>
        <begin position="722"/>
        <end position="775"/>
    </location>
</feature>
<feature type="region of interest" description="Disordered" evidence="4">
    <location>
        <begin position="961"/>
        <end position="1012"/>
    </location>
</feature>
<feature type="region of interest" description="Disordered" evidence="4">
    <location>
        <begin position="1413"/>
        <end position="1451"/>
    </location>
</feature>
<feature type="compositionally biased region" description="Low complexity" evidence="4">
    <location>
        <begin position="9"/>
        <end position="53"/>
    </location>
</feature>
<feature type="compositionally biased region" description="Basic residues" evidence="4">
    <location>
        <begin position="66"/>
        <end position="75"/>
    </location>
</feature>
<feature type="compositionally biased region" description="Basic and acidic residues" evidence="4">
    <location>
        <begin position="748"/>
        <end position="758"/>
    </location>
</feature>
<feature type="compositionally biased region" description="Basic residues" evidence="4">
    <location>
        <begin position="969"/>
        <end position="984"/>
    </location>
</feature>
<feature type="compositionally biased region" description="Low complexity" evidence="4">
    <location>
        <begin position="989"/>
        <end position="1010"/>
    </location>
</feature>
<feature type="modified residue" description="Phosphoserine" evidence="1">
    <location>
        <position position="270"/>
    </location>
</feature>
<comment type="function">
    <text evidence="2">mRNA-binding protein involved in proper cytoplasmic distribution of mitochondria.</text>
</comment>
<comment type="subcellular location">
    <subcellularLocation>
        <location evidence="2">Cytoplasm</location>
    </subcellularLocation>
</comment>
<comment type="similarity">
    <text evidence="2">Belongs to the CLU family.</text>
</comment>